<protein>
    <recommendedName>
        <fullName evidence="16">Calmodulin-binding transcription activator 1</fullName>
        <shortName evidence="16">AtCAMTA1</shortName>
    </recommendedName>
    <alternativeName>
        <fullName evidence="15">Ethylene-induced calmodulin-binding protein b</fullName>
        <shortName evidence="15">EICBP.b</shortName>
    </alternativeName>
    <alternativeName>
        <fullName evidence="17">Signal-responsive protein 2</fullName>
        <shortName evidence="17">AtSR2</shortName>
    </alternativeName>
</protein>
<reference key="1">
    <citation type="journal article" date="2000" name="Nature">
        <title>Sequence and analysis of chromosome 5 of the plant Arabidopsis thaliana.</title>
        <authorList>
            <person name="Tabata S."/>
            <person name="Kaneko T."/>
            <person name="Nakamura Y."/>
            <person name="Kotani H."/>
            <person name="Kato T."/>
            <person name="Asamizu E."/>
            <person name="Miyajima N."/>
            <person name="Sasamoto S."/>
            <person name="Kimura T."/>
            <person name="Hosouchi T."/>
            <person name="Kawashima K."/>
            <person name="Kohara M."/>
            <person name="Matsumoto M."/>
            <person name="Matsuno A."/>
            <person name="Muraki A."/>
            <person name="Nakayama S."/>
            <person name="Nakazaki N."/>
            <person name="Naruo K."/>
            <person name="Okumura S."/>
            <person name="Shinpo S."/>
            <person name="Takeuchi C."/>
            <person name="Wada T."/>
            <person name="Watanabe A."/>
            <person name="Yamada M."/>
            <person name="Yasuda M."/>
            <person name="Sato S."/>
            <person name="de la Bastide M."/>
            <person name="Huang E."/>
            <person name="Spiegel L."/>
            <person name="Gnoj L."/>
            <person name="O'Shaughnessy A."/>
            <person name="Preston R."/>
            <person name="Habermann K."/>
            <person name="Murray J."/>
            <person name="Johnson D."/>
            <person name="Rohlfing T."/>
            <person name="Nelson J."/>
            <person name="Stoneking T."/>
            <person name="Pepin K."/>
            <person name="Spieth J."/>
            <person name="Sekhon M."/>
            <person name="Armstrong J."/>
            <person name="Becker M."/>
            <person name="Belter E."/>
            <person name="Cordum H."/>
            <person name="Cordes M."/>
            <person name="Courtney L."/>
            <person name="Courtney W."/>
            <person name="Dante M."/>
            <person name="Du H."/>
            <person name="Edwards J."/>
            <person name="Fryman J."/>
            <person name="Haakensen B."/>
            <person name="Lamar E."/>
            <person name="Latreille P."/>
            <person name="Leonard S."/>
            <person name="Meyer R."/>
            <person name="Mulvaney E."/>
            <person name="Ozersky P."/>
            <person name="Riley A."/>
            <person name="Strowmatt C."/>
            <person name="Wagner-McPherson C."/>
            <person name="Wollam A."/>
            <person name="Yoakum M."/>
            <person name="Bell M."/>
            <person name="Dedhia N."/>
            <person name="Parnell L."/>
            <person name="Shah R."/>
            <person name="Rodriguez M."/>
            <person name="Hoon See L."/>
            <person name="Vil D."/>
            <person name="Baker J."/>
            <person name="Kirchoff K."/>
            <person name="Toth K."/>
            <person name="King L."/>
            <person name="Bahret A."/>
            <person name="Miller B."/>
            <person name="Marra M.A."/>
            <person name="Martienssen R."/>
            <person name="McCombie W.R."/>
            <person name="Wilson R.K."/>
            <person name="Murphy G."/>
            <person name="Bancroft I."/>
            <person name="Volckaert G."/>
            <person name="Wambutt R."/>
            <person name="Duesterhoeft A."/>
            <person name="Stiekema W."/>
            <person name="Pohl T."/>
            <person name="Entian K.-D."/>
            <person name="Terryn N."/>
            <person name="Hartley N."/>
            <person name="Bent E."/>
            <person name="Johnson S."/>
            <person name="Langham S.-A."/>
            <person name="McCullagh B."/>
            <person name="Robben J."/>
            <person name="Grymonprez B."/>
            <person name="Zimmermann W."/>
            <person name="Ramsperger U."/>
            <person name="Wedler H."/>
            <person name="Balke K."/>
            <person name="Wedler E."/>
            <person name="Peters S."/>
            <person name="van Staveren M."/>
            <person name="Dirkse W."/>
            <person name="Mooijman P."/>
            <person name="Klein Lankhorst R."/>
            <person name="Weitzenegger T."/>
            <person name="Bothe G."/>
            <person name="Rose M."/>
            <person name="Hauf J."/>
            <person name="Berneiser S."/>
            <person name="Hempel S."/>
            <person name="Feldpausch M."/>
            <person name="Lamberth S."/>
            <person name="Villarroel R."/>
            <person name="Gielen J."/>
            <person name="Ardiles W."/>
            <person name="Bents O."/>
            <person name="Lemcke K."/>
            <person name="Kolesov G."/>
            <person name="Mayer K.F.X."/>
            <person name="Rudd S."/>
            <person name="Schoof H."/>
            <person name="Schueller C."/>
            <person name="Zaccaria P."/>
            <person name="Mewes H.-W."/>
            <person name="Bevan M."/>
            <person name="Fransz P.F."/>
        </authorList>
    </citation>
    <scope>NUCLEOTIDE SEQUENCE [LARGE SCALE GENOMIC DNA]</scope>
    <source>
        <strain>cv. Columbia</strain>
    </source>
</reference>
<reference key="2">
    <citation type="journal article" date="2017" name="Plant J.">
        <title>Araport11: a complete reannotation of the Arabidopsis thaliana reference genome.</title>
        <authorList>
            <person name="Cheng C.Y."/>
            <person name="Krishnakumar V."/>
            <person name="Chan A.P."/>
            <person name="Thibaud-Nissen F."/>
            <person name="Schobel S."/>
            <person name="Town C.D."/>
        </authorList>
    </citation>
    <scope>GENOME REANNOTATION</scope>
    <source>
        <strain>cv. Columbia</strain>
    </source>
</reference>
<reference key="3">
    <citation type="submission" date="2006-07" db="EMBL/GenBank/DDBJ databases">
        <title>Large-scale analysis of RIKEN Arabidopsis full-length (RAFL) cDNAs.</title>
        <authorList>
            <person name="Totoki Y."/>
            <person name="Seki M."/>
            <person name="Ishida J."/>
            <person name="Nakajima M."/>
            <person name="Enju A."/>
            <person name="Kamiya A."/>
            <person name="Narusaka M."/>
            <person name="Shin-i T."/>
            <person name="Nakagawa M."/>
            <person name="Sakamoto N."/>
            <person name="Oishi K."/>
            <person name="Kohara Y."/>
            <person name="Kobayashi M."/>
            <person name="Toyoda A."/>
            <person name="Sakaki Y."/>
            <person name="Sakurai T."/>
            <person name="Iida K."/>
            <person name="Akiyama K."/>
            <person name="Satou M."/>
            <person name="Toyoda T."/>
            <person name="Konagaya A."/>
            <person name="Carninci P."/>
            <person name="Kawai J."/>
            <person name="Hayashizaki Y."/>
            <person name="Shinozaki K."/>
        </authorList>
    </citation>
    <scope>NUCLEOTIDE SEQUENCE [LARGE SCALE MRNA] (ISOFORM 2)</scope>
    <source>
        <strain>cv. Columbia</strain>
    </source>
</reference>
<reference key="4">
    <citation type="journal article" date="2002" name="J. Biol. Chem.">
        <title>A novel family of calmodulin-binding transcription activators in multicellular organisms.</title>
        <authorList>
            <person name="Bouche N."/>
            <person name="Scharlat A."/>
            <person name="Snedden W."/>
            <person name="Bouchez D."/>
            <person name="Fromm H."/>
        </authorList>
    </citation>
    <scope>FUNCTION</scope>
    <scope>SUBCELLULAR LOCATION</scope>
    <scope>CALMODULIN-BINDING</scope>
    <scope>GENE FAMILY</scope>
    <scope>NOMENCLATURE</scope>
</reference>
<reference key="5">
    <citation type="journal article" date="2002" name="J. Biol. Chem.">
        <title>A calmodulin-binding/CGCG box DNA-binding protein family involved in multiple signaling pathways in plants.</title>
        <authorList>
            <person name="Yang T."/>
            <person name="Poovaiah B.W."/>
        </authorList>
    </citation>
    <scope>INDUCTION</scope>
    <scope>TISSUE SPECIFICITY</scope>
</reference>
<reference key="6">
    <citation type="journal article" date="2003" name="Plant Cell Physiol.">
        <title>Arabidopsis CAMTA family proteins enhance V-PPase expression in pollen.</title>
        <authorList>
            <person name="Mitsuda N."/>
            <person name="Isono T."/>
            <person name="Sato M.H."/>
        </authorList>
    </citation>
    <scope>FUNCTION</scope>
    <scope>TISSUE SPECIFICITY</scope>
</reference>
<reference key="7">
    <citation type="journal article" date="2009" name="Plant Cell">
        <title>Roles for Arabidopsis CAMTA transcription factors in cold-regulated gene expression and freezing tolerance.</title>
        <authorList>
            <person name="Doherty C.J."/>
            <person name="Van Buskirk H.A."/>
            <person name="Myers S.J."/>
            <person name="Thomashow M.F."/>
        </authorList>
    </citation>
    <scope>FUNCTION</scope>
    <scope>DISRUPTION PHENOTYPE</scope>
</reference>
<reference key="8">
    <citation type="journal article" date="2010" name="Planta">
        <title>Calmodulin-binding transcription activator 1 mediates auxin signaling and responds to stresses in Arabidopsis.</title>
        <authorList>
            <person name="Galon Y."/>
            <person name="Aloni R."/>
            <person name="Nachmias D."/>
            <person name="Snir O."/>
            <person name="Feldmesser E."/>
            <person name="Scrase-Field S."/>
            <person name="Boyce J.M."/>
            <person name="Bouche N."/>
            <person name="Knight M.R."/>
            <person name="Fromm H."/>
        </authorList>
    </citation>
    <scope>FUNCTION</scope>
    <scope>DEVELOPMENTAL STAGE</scope>
    <scope>INDUCTION</scope>
    <scope>DISRUPTION PHENOTYPE</scope>
</reference>
<reference key="9">
    <citation type="journal article" date="2013" name="BMC Genomics">
        <title>CAMTA 1 regulates drought responses in Arabidopsis thaliana.</title>
        <authorList>
            <person name="Pandey N."/>
            <person name="Ranjan A."/>
            <person name="Pant P."/>
            <person name="Tripathi R.K."/>
            <person name="Ateek F."/>
            <person name="Pandey H.P."/>
            <person name="Patre U.V."/>
            <person name="Sawant S.V."/>
        </authorList>
    </citation>
    <scope>FUNCTION</scope>
    <scope>DISRUPTION PHENOTYPE</scope>
</reference>
<reference key="10">
    <citation type="journal article" date="2013" name="Plant J.">
        <title>Roles of CAMTA transcription factors and salicylic acid in configuring the low-temperature transcriptome and freezing tolerance of Arabidopsis.</title>
        <authorList>
            <person name="Kim Y."/>
            <person name="Park S."/>
            <person name="Gilmour S.J."/>
            <person name="Thomashow M.F."/>
        </authorList>
    </citation>
    <scope>FUNCTION</scope>
    <scope>DISRUPTION PHENOTYPE</scope>
</reference>
<reference key="11">
    <citation type="journal article" date="2015" name="Plant Physiol.">
        <title>SENSITIVE TO PROTON RHIZOTOXICITY1, CALMODULIN BINDING TRANSCRIPTION ACTIVATOR2, and other transcription factors are involved in ALUMINUM-ACTIVATED MALATE TRANSPORTER1 expression.</title>
        <authorList>
            <person name="Tokizawa M."/>
            <person name="Kobayashi Y."/>
            <person name="Saito T."/>
            <person name="Kobayashi M."/>
            <person name="Iuchi S."/>
            <person name="Nomoto M."/>
            <person name="Tada Y."/>
            <person name="Yamamoto Y.Y."/>
            <person name="Koyama H."/>
        </authorList>
    </citation>
    <scope>INDUCTION BY ALUMINUM</scope>
</reference>
<reference key="12">
    <citation type="journal article" date="2000" name="Biochem. Biophys. Res. Commun.">
        <title>A calmodulin binding protein from Arabidopsis is induced by ethylene and contains a DNA-binding motif.</title>
        <authorList>
            <person name="Reddy A.S.N."/>
            <person name="Reddy V.S."/>
            <person name="Golovkin M."/>
        </authorList>
    </citation>
    <scope>IDENTIFICATION</scope>
</reference>
<reference key="13">
    <citation type="journal article" date="2002" name="J. Biol. Chem.">
        <title>Genes encoding calmodulin-binding proteins in the Arabidopsis genome.</title>
        <authorList>
            <person name="Reddy V.S."/>
            <person name="Ali G.S."/>
            <person name="Reddy A.S.N."/>
        </authorList>
    </citation>
    <scope>IDENTIFICATION</scope>
</reference>
<sequence>MVDRRSFGSITPPLQLDMEQLLSEAQHRWLRPTEICEILQNYHKFHIASESPTRPASGSLFLFDRKVLRYFRKDGHNWRKKKDGKTIREAHEKLKVGSIDVLHCYYAHGEANENFQRRCYWMLEQHLMHIVFVHYLEVKGNRTSIGMKENNSNSVNGTASVNIDSTASPTSTLSSLCEDADTGDSQQASSVLRPSPEPQTGNRYGWTPAPGMRNVSQVHGNRVRESDSQRLVDVRALDTVGNSLTRFHDQPYCNNLLTQMQPSNTDSMLVEENSEKGGRLKAEHIRNPLQTQFNWQDDTDLALFEQSAQDNFETFSSLLGSENLQPFGISYQAPPSNMDSEYMPVMKILRRSEDSLKKVDSFSKWAIKELGEMEDLQMQSSRGDIAWTTVECETAAAGISLSPSLSEDQRFTIVDFWPKSAKTDAEVEVMVIGTFLLSPQEVTKYNWSCMFGEVEVPAEILVDGVLCCHAPPHTAGHVPFYVTCSNRFACSEVREFDFLSGSTQKINATDVYGTYTNEASLQLRFEKMLAHRDFVHEHHIFEDVGDKRRQISKIMLLKEEKEYLLPGTYQRDSTKQEPKGQLFRELFEEELYIWLIHKVTEEGKGPNILDEDGQGILHFVAALGYDWAIKPVLAAGVNINFRDANGWSALHWAAFSGREETVAVLVSLGADAGALTDPSPELPLGKTAADLAYANGHRGISGFLAESSLTSYLEKLTVDSKENSPANSCGEKAVQTVSERTAAPMTYGDVPEKLSLKDSLTAVRNATQAADRLHQVFRMQSFQRKQLCDIGDDEKIDISDQLAVSFAASKTKNPGQGDVSLSCAATHIQKKYRGWKKRKEFLLIRQRIVKIQAHVRGHQVRKQYRTVIWSVGLLEKIILRWRRKGNGLRGFKRNAVAKTVEPEPPVSAICPRIPQEDEYDYLKEGRKQTEERLQKALTRVKSMVQYPEARDQYRRLLTVVEGFRENEASSSASINNKEEEAVNCEEDDFIDIESLLNDDTLMMSISP</sequence>
<gene>
    <name evidence="16" type="primary">CAMTA1</name>
    <name evidence="19" type="synonym">CMTA1</name>
    <name evidence="17" type="synonym">SR2</name>
    <name evidence="21" type="ordered locus">At5g09410</name>
    <name evidence="22" type="ORF">T5E8.210</name>
</gene>
<proteinExistence type="evidence at protein level"/>
<accession>Q9FY74</accession>
<accession>F4KCL6</accession>
<accession>Q0WQF9</accession>
<comment type="function">
    <text evidence="2 7 9 10 11 12 13 20">Transcription activator that binds calmodulin in a calcium-dependent manner in vitro (PubMed:11925432). Binds to the DNA consensus sequence 5'-[ACG]CGCG[GTC]-3' (By similarity). Regulates transcriptional activity in response to calcium signals (Probable). Involved in freezing tolerance (PubMed:19270186). Involved in freezing tolerance in association with CAMTA2 and CAMTA3. Contributes together with CAMTA2 and CAMTA3 to the positive regulation of the cold-induced expression of DREB1A/CBF3, DREB1B/CBF1 and DREB1C/CBF2 (PubMed:23581962). Involved in drought stress responses by regulating several drought-responsive genes (PubMed:23547968). Involved in auxin signaling and responses to abiotic stresses (PubMed:20383645). Activates the expression of the V-PPase proton pump AVP1 in pollen (PubMed:14581622).</text>
</comment>
<comment type="subcellular location">
    <subcellularLocation>
        <location evidence="5 7">Nucleus</location>
    </subcellularLocation>
</comment>
<comment type="alternative products">
    <event type="alternative splicing"/>
    <isoform>
        <id>Q9FY74-1</id>
        <name>1</name>
        <sequence type="displayed"/>
    </isoform>
    <isoform>
        <id>Q9FY74-2</id>
        <name>2</name>
        <sequence type="described" ref="VSP_040640"/>
    </isoform>
</comment>
<comment type="tissue specificity">
    <text evidence="8 9">Expressed in roots, stems, leaves, pollen and siliques.</text>
</comment>
<comment type="developmental stage">
    <text evidence="11">During leaf development, expressed in young leaf primordia, hydathodes of young leaf tips, hydathodes of the lobes in maturating leaves and lamina within the minor veins in adult leaves. During flower development, expressed in developing stamens, germinating pollen grains, ovules and developing seeds.</text>
</comment>
<comment type="induction">
    <text evidence="8 11 14">Induced by UVB, wounding, ethylene and methyl jasmonate (PubMed:12218065). Induced by salt stress and heat shock (PubMed:12218065, PubMed:20383645). Induced by aluminum (PubMed:25627216).</text>
</comment>
<comment type="domain">
    <text>The two IQ domains are probably not interacting with calcium/calmodulin.</text>
</comment>
<comment type="disruption phenotype">
    <text evidence="10 11 12 13">No visible phenotype under normal growth conditions, but mutant seedling are hyper-responsive to auxin in hypocotyl growth inhibition (PubMed:20383645). No visible phenotype under normal growth conditions, but mutant seedling exhibit reduced drought tolerance (PubMed:23547968). No visible phenotype under normal growth conditions, but the double mutants camta1 and camta3 are impaired in freezing tolerance (PubMed:19270186). No visible phenotype under normal growth conditions, but the double mutants camt1 and camt3 exhibit semi-dwarf phenotypes (PubMed:19270186, PubMed:23581962).</text>
</comment>
<comment type="similarity">
    <text evidence="19">Belongs to the CAMTA family.</text>
</comment>
<evidence type="ECO:0000250" key="1">
    <source>
        <dbReference type="UniProtKB" id="Q6NPP4"/>
    </source>
</evidence>
<evidence type="ECO:0000250" key="2">
    <source>
        <dbReference type="UniProtKB" id="Q8GSA7"/>
    </source>
</evidence>
<evidence type="ECO:0000255" key="3"/>
<evidence type="ECO:0000255" key="4">
    <source>
        <dbReference type="PROSITE-ProRule" id="PRU00116"/>
    </source>
</evidence>
<evidence type="ECO:0000255" key="5">
    <source>
        <dbReference type="PROSITE-ProRule" id="PRU00767"/>
    </source>
</evidence>
<evidence type="ECO:0000256" key="6">
    <source>
        <dbReference type="SAM" id="MobiDB-lite"/>
    </source>
</evidence>
<evidence type="ECO:0000269" key="7">
    <source>
    </source>
</evidence>
<evidence type="ECO:0000269" key="8">
    <source>
    </source>
</evidence>
<evidence type="ECO:0000269" key="9">
    <source>
    </source>
</evidence>
<evidence type="ECO:0000269" key="10">
    <source>
    </source>
</evidence>
<evidence type="ECO:0000269" key="11">
    <source>
    </source>
</evidence>
<evidence type="ECO:0000269" key="12">
    <source>
    </source>
</evidence>
<evidence type="ECO:0000269" key="13">
    <source>
    </source>
</evidence>
<evidence type="ECO:0000269" key="14">
    <source>
    </source>
</evidence>
<evidence type="ECO:0000303" key="15">
    <source>
    </source>
</evidence>
<evidence type="ECO:0000303" key="16">
    <source>
    </source>
</evidence>
<evidence type="ECO:0000303" key="17">
    <source>
    </source>
</evidence>
<evidence type="ECO:0000303" key="18">
    <source ref="3"/>
</evidence>
<evidence type="ECO:0000305" key="19"/>
<evidence type="ECO:0000305" key="20">
    <source>
    </source>
</evidence>
<evidence type="ECO:0000312" key="21">
    <source>
        <dbReference type="Araport" id="AT5G09410"/>
    </source>
</evidence>
<evidence type="ECO:0000312" key="22">
    <source>
        <dbReference type="EMBL" id="CAC05467.1"/>
    </source>
</evidence>
<dbReference type="EMBL" id="AL391712">
    <property type="protein sequence ID" value="CAC05467.1"/>
    <property type="molecule type" value="Genomic_DNA"/>
</dbReference>
<dbReference type="EMBL" id="CP002688">
    <property type="protein sequence ID" value="AED91388.1"/>
    <property type="molecule type" value="Genomic_DNA"/>
</dbReference>
<dbReference type="EMBL" id="CP002688">
    <property type="protein sequence ID" value="AED91389.1"/>
    <property type="molecule type" value="Genomic_DNA"/>
</dbReference>
<dbReference type="EMBL" id="AK228740">
    <property type="protein sequence ID" value="BAF00640.1"/>
    <property type="molecule type" value="mRNA"/>
</dbReference>
<dbReference type="RefSeq" id="NP_001119195.1">
    <molecule id="Q9FY74-1"/>
    <property type="nucleotide sequence ID" value="NM_001125723.2"/>
</dbReference>
<dbReference type="RefSeq" id="NP_196503.3">
    <molecule id="Q9FY74-2"/>
    <property type="nucleotide sequence ID" value="NM_120978.5"/>
</dbReference>
<dbReference type="SMR" id="Q9FY74"/>
<dbReference type="BioGRID" id="16078">
    <property type="interactions" value="1"/>
</dbReference>
<dbReference type="FunCoup" id="Q9FY74">
    <property type="interactions" value="1675"/>
</dbReference>
<dbReference type="STRING" id="3702.Q9FY74"/>
<dbReference type="iPTMnet" id="Q9FY74"/>
<dbReference type="PaxDb" id="3702-AT5G09410.3"/>
<dbReference type="EnsemblPlants" id="AT5G09410.1">
    <molecule id="Q9FY74-2"/>
    <property type="protein sequence ID" value="AT5G09410.1"/>
    <property type="gene ID" value="AT5G09410"/>
</dbReference>
<dbReference type="EnsemblPlants" id="AT5G09410.2">
    <molecule id="Q9FY74-1"/>
    <property type="protein sequence ID" value="AT5G09410.2"/>
    <property type="gene ID" value="AT5G09410"/>
</dbReference>
<dbReference type="GeneID" id="830800"/>
<dbReference type="Gramene" id="AT5G09410.1">
    <molecule id="Q9FY74-2"/>
    <property type="protein sequence ID" value="AT5G09410.1"/>
    <property type="gene ID" value="AT5G09410"/>
</dbReference>
<dbReference type="Gramene" id="AT5G09410.2">
    <molecule id="Q9FY74-1"/>
    <property type="protein sequence ID" value="AT5G09410.2"/>
    <property type="gene ID" value="AT5G09410"/>
</dbReference>
<dbReference type="KEGG" id="ath:AT5G09410"/>
<dbReference type="Araport" id="AT5G09410"/>
<dbReference type="TAIR" id="AT5G09410">
    <property type="gene designation" value="EICBP.B"/>
</dbReference>
<dbReference type="eggNOG" id="KOG0520">
    <property type="taxonomic scope" value="Eukaryota"/>
</dbReference>
<dbReference type="InParanoid" id="Q9FY74"/>
<dbReference type="OMA" id="EMVLHLR"/>
<dbReference type="PRO" id="PR:Q9FY74"/>
<dbReference type="Proteomes" id="UP000006548">
    <property type="component" value="Chromosome 5"/>
</dbReference>
<dbReference type="ExpressionAtlas" id="Q9FY74">
    <property type="expression patterns" value="baseline and differential"/>
</dbReference>
<dbReference type="GO" id="GO:0005634">
    <property type="term" value="C:nucleus"/>
    <property type="evidence" value="ECO:0000314"/>
    <property type="project" value="UniProtKB"/>
</dbReference>
<dbReference type="GO" id="GO:0005516">
    <property type="term" value="F:calmodulin binding"/>
    <property type="evidence" value="ECO:0000314"/>
    <property type="project" value="UniProtKB"/>
</dbReference>
<dbReference type="GO" id="GO:0003677">
    <property type="term" value="F:DNA binding"/>
    <property type="evidence" value="ECO:0007669"/>
    <property type="project" value="UniProtKB-KW"/>
</dbReference>
<dbReference type="GO" id="GO:0045893">
    <property type="term" value="P:positive regulation of DNA-templated transcription"/>
    <property type="evidence" value="ECO:0000314"/>
    <property type="project" value="UniProtKB"/>
</dbReference>
<dbReference type="GO" id="GO:0009733">
    <property type="term" value="P:response to auxin"/>
    <property type="evidence" value="ECO:0000315"/>
    <property type="project" value="UniProtKB"/>
</dbReference>
<dbReference type="GO" id="GO:0050826">
    <property type="term" value="P:response to freezing"/>
    <property type="evidence" value="ECO:0000315"/>
    <property type="project" value="UniProtKB"/>
</dbReference>
<dbReference type="GO" id="GO:0009414">
    <property type="term" value="P:response to water deprivation"/>
    <property type="evidence" value="ECO:0000315"/>
    <property type="project" value="UniProtKB"/>
</dbReference>
<dbReference type="FunFam" id="1.20.5.190:FF:000003">
    <property type="entry name" value="Calmodulin-binding transcription activator 2"/>
    <property type="match status" value="1"/>
</dbReference>
<dbReference type="FunFam" id="1.25.40.20:FF:000326">
    <property type="entry name" value="Calmodulin-binding transcription activator 2"/>
    <property type="match status" value="1"/>
</dbReference>
<dbReference type="FunFam" id="2.60.40.10:FF:000314">
    <property type="entry name" value="Calmodulin-binding transcription activator 2"/>
    <property type="match status" value="1"/>
</dbReference>
<dbReference type="Gene3D" id="1.20.5.190">
    <property type="match status" value="1"/>
</dbReference>
<dbReference type="Gene3D" id="1.25.40.20">
    <property type="entry name" value="Ankyrin repeat-containing domain"/>
    <property type="match status" value="1"/>
</dbReference>
<dbReference type="Gene3D" id="2.60.40.10">
    <property type="entry name" value="Immunoglobulins"/>
    <property type="match status" value="1"/>
</dbReference>
<dbReference type="InterPro" id="IPR002110">
    <property type="entry name" value="Ankyrin_rpt"/>
</dbReference>
<dbReference type="InterPro" id="IPR036770">
    <property type="entry name" value="Ankyrin_rpt-contain_sf"/>
</dbReference>
<dbReference type="InterPro" id="IPR005559">
    <property type="entry name" value="CG-1_dom"/>
</dbReference>
<dbReference type="InterPro" id="IPR013783">
    <property type="entry name" value="Ig-like_fold"/>
</dbReference>
<dbReference type="InterPro" id="IPR014756">
    <property type="entry name" value="Ig_E-set"/>
</dbReference>
<dbReference type="InterPro" id="IPR002909">
    <property type="entry name" value="IPT_dom"/>
</dbReference>
<dbReference type="InterPro" id="IPR000048">
    <property type="entry name" value="IQ_motif_EF-hand-BS"/>
</dbReference>
<dbReference type="InterPro" id="IPR027417">
    <property type="entry name" value="P-loop_NTPase"/>
</dbReference>
<dbReference type="PANTHER" id="PTHR23335:SF29">
    <property type="entry name" value="CALMODULIN-BINDING TRANSCRIPTION ACTIVATOR 1"/>
    <property type="match status" value="1"/>
</dbReference>
<dbReference type="PANTHER" id="PTHR23335">
    <property type="entry name" value="CALMODULIN-BINDING TRANSCRIPTION ACTIVATOR CAMTA"/>
    <property type="match status" value="1"/>
</dbReference>
<dbReference type="Pfam" id="PF12796">
    <property type="entry name" value="Ank_2"/>
    <property type="match status" value="1"/>
</dbReference>
<dbReference type="Pfam" id="PF03859">
    <property type="entry name" value="CG-1"/>
    <property type="match status" value="1"/>
</dbReference>
<dbReference type="Pfam" id="PF00612">
    <property type="entry name" value="IQ"/>
    <property type="match status" value="2"/>
</dbReference>
<dbReference type="Pfam" id="PF01833">
    <property type="entry name" value="TIG"/>
    <property type="match status" value="1"/>
</dbReference>
<dbReference type="SMART" id="SM00248">
    <property type="entry name" value="ANK"/>
    <property type="match status" value="1"/>
</dbReference>
<dbReference type="SMART" id="SM01076">
    <property type="entry name" value="CG-1"/>
    <property type="match status" value="1"/>
</dbReference>
<dbReference type="SMART" id="SM00015">
    <property type="entry name" value="IQ"/>
    <property type="match status" value="2"/>
</dbReference>
<dbReference type="SUPFAM" id="SSF48403">
    <property type="entry name" value="Ankyrin repeat"/>
    <property type="match status" value="1"/>
</dbReference>
<dbReference type="SUPFAM" id="SSF81296">
    <property type="entry name" value="E set domains"/>
    <property type="match status" value="1"/>
</dbReference>
<dbReference type="SUPFAM" id="SSF52540">
    <property type="entry name" value="P-loop containing nucleoside triphosphate hydrolases"/>
    <property type="match status" value="1"/>
</dbReference>
<dbReference type="PROSITE" id="PS50297">
    <property type="entry name" value="ANK_REP_REGION"/>
    <property type="match status" value="1"/>
</dbReference>
<dbReference type="PROSITE" id="PS50088">
    <property type="entry name" value="ANK_REPEAT"/>
    <property type="match status" value="1"/>
</dbReference>
<dbReference type="PROSITE" id="PS51437">
    <property type="entry name" value="CG_1"/>
    <property type="match status" value="1"/>
</dbReference>
<dbReference type="PROSITE" id="PS50096">
    <property type="entry name" value="IQ"/>
    <property type="match status" value="2"/>
</dbReference>
<organism>
    <name type="scientific">Arabidopsis thaliana</name>
    <name type="common">Mouse-ear cress</name>
    <dbReference type="NCBI Taxonomy" id="3702"/>
    <lineage>
        <taxon>Eukaryota</taxon>
        <taxon>Viridiplantae</taxon>
        <taxon>Streptophyta</taxon>
        <taxon>Embryophyta</taxon>
        <taxon>Tracheophyta</taxon>
        <taxon>Spermatophyta</taxon>
        <taxon>Magnoliopsida</taxon>
        <taxon>eudicotyledons</taxon>
        <taxon>Gunneridae</taxon>
        <taxon>Pentapetalae</taxon>
        <taxon>rosids</taxon>
        <taxon>malvids</taxon>
        <taxon>Brassicales</taxon>
        <taxon>Brassicaceae</taxon>
        <taxon>Camelineae</taxon>
        <taxon>Arabidopsis</taxon>
    </lineage>
</organism>
<name>CMTA1_ARATH</name>
<keyword id="KW-0010">Activator</keyword>
<keyword id="KW-0025">Alternative splicing</keyword>
<keyword id="KW-0040">ANK repeat</keyword>
<keyword id="KW-0106">Calcium</keyword>
<keyword id="KW-0112">Calmodulin-binding</keyword>
<keyword id="KW-0175">Coiled coil</keyword>
<keyword id="KW-0238">DNA-binding</keyword>
<keyword id="KW-0539">Nucleus</keyword>
<keyword id="KW-0597">Phosphoprotein</keyword>
<keyword id="KW-1185">Reference proteome</keyword>
<keyword id="KW-0677">Repeat</keyword>
<keyword id="KW-0346">Stress response</keyword>
<keyword id="KW-0804">Transcription</keyword>
<keyword id="KW-0805">Transcription regulation</keyword>
<feature type="chain" id="PRO_0000114486" description="Calmodulin-binding transcription activator 1">
    <location>
        <begin position="1"/>
        <end position="1007"/>
    </location>
</feature>
<feature type="repeat" description="ANK 1">
    <location>
        <begin position="612"/>
        <end position="641"/>
    </location>
</feature>
<feature type="repeat" description="ANK 2">
    <location>
        <begin position="645"/>
        <end position="674"/>
    </location>
</feature>
<feature type="domain" description="IQ 1" evidence="4">
    <location>
        <begin position="821"/>
        <end position="850"/>
    </location>
</feature>
<feature type="domain" description="IQ 2" evidence="4">
    <location>
        <begin position="844"/>
        <end position="873"/>
    </location>
</feature>
<feature type="DNA-binding region" description="CG-1" evidence="5">
    <location>
        <begin position="18"/>
        <end position="144"/>
    </location>
</feature>
<feature type="region of interest" description="Disordered" evidence="6">
    <location>
        <begin position="148"/>
        <end position="227"/>
    </location>
</feature>
<feature type="region of interest" description="Transcription activation" evidence="7">
    <location>
        <begin position="233"/>
        <end position="398"/>
    </location>
</feature>
<feature type="region of interest" description="Calmodulin-binding" evidence="7">
    <location>
        <begin position="869"/>
        <end position="891"/>
    </location>
</feature>
<feature type="coiled-coil region" evidence="3">
    <location>
        <begin position="915"/>
        <end position="943"/>
    </location>
</feature>
<feature type="compositionally biased region" description="Polar residues" evidence="6">
    <location>
        <begin position="148"/>
        <end position="164"/>
    </location>
</feature>
<feature type="compositionally biased region" description="Low complexity" evidence="6">
    <location>
        <begin position="165"/>
        <end position="176"/>
    </location>
</feature>
<feature type="compositionally biased region" description="Polar residues" evidence="6">
    <location>
        <begin position="183"/>
        <end position="202"/>
    </location>
</feature>
<feature type="modified residue" description="Phosphoserine" evidence="1">
    <location>
        <position position="942"/>
    </location>
</feature>
<feature type="splice variant" id="VSP_040640" description="In isoform 2." evidence="18">
    <location>
        <begin position="184"/>
        <end position="201"/>
    </location>
</feature>
<feature type="sequence conflict" description="In Ref. 1; CAC05467." evidence="19" ref="1">
    <original>E</original>
    <variation>Q</variation>
    <location>
        <position position="137"/>
    </location>
</feature>